<comment type="function">
    <text evidence="1">Catalyzes the deamination of dCTP to dUTP.</text>
</comment>
<comment type="catalytic activity">
    <reaction evidence="1">
        <text>dCTP + H2O + H(+) = dUTP + NH4(+)</text>
        <dbReference type="Rhea" id="RHEA:22680"/>
        <dbReference type="ChEBI" id="CHEBI:15377"/>
        <dbReference type="ChEBI" id="CHEBI:15378"/>
        <dbReference type="ChEBI" id="CHEBI:28938"/>
        <dbReference type="ChEBI" id="CHEBI:61481"/>
        <dbReference type="ChEBI" id="CHEBI:61555"/>
        <dbReference type="EC" id="3.5.4.13"/>
    </reaction>
</comment>
<comment type="pathway">
    <text evidence="1">Pyrimidine metabolism; dUMP biosynthesis; dUMP from dCTP (dUTP route): step 1/2.</text>
</comment>
<comment type="subunit">
    <text evidence="1">Homotrimer.</text>
</comment>
<comment type="similarity">
    <text evidence="1">Belongs to the dCTP deaminase family.</text>
</comment>
<protein>
    <recommendedName>
        <fullName evidence="1">dCTP deaminase</fullName>
        <ecNumber evidence="1">3.5.4.13</ecNumber>
    </recommendedName>
    <alternativeName>
        <fullName evidence="1">Deoxycytidine triphosphate deaminase</fullName>
    </alternativeName>
</protein>
<feature type="chain" id="PRO_0000156022" description="dCTP deaminase">
    <location>
        <begin position="1"/>
        <end position="191"/>
    </location>
</feature>
<feature type="active site" description="Proton donor/acceptor" evidence="1">
    <location>
        <position position="138"/>
    </location>
</feature>
<feature type="binding site" evidence="1">
    <location>
        <begin position="112"/>
        <end position="117"/>
    </location>
    <ligand>
        <name>dCTP</name>
        <dbReference type="ChEBI" id="CHEBI:61481"/>
    </ligand>
</feature>
<feature type="binding site" evidence="1">
    <location>
        <begin position="136"/>
        <end position="138"/>
    </location>
    <ligand>
        <name>dCTP</name>
        <dbReference type="ChEBI" id="CHEBI:61481"/>
    </ligand>
</feature>
<feature type="binding site" evidence="1">
    <location>
        <position position="157"/>
    </location>
    <ligand>
        <name>dCTP</name>
        <dbReference type="ChEBI" id="CHEBI:61481"/>
    </ligand>
</feature>
<feature type="binding site" evidence="1">
    <location>
        <position position="173"/>
    </location>
    <ligand>
        <name>dCTP</name>
        <dbReference type="ChEBI" id="CHEBI:61481"/>
    </ligand>
</feature>
<feature type="binding site" evidence="1">
    <location>
        <position position="183"/>
    </location>
    <ligand>
        <name>dCTP</name>
        <dbReference type="ChEBI" id="CHEBI:61481"/>
    </ligand>
</feature>
<organism>
    <name type="scientific">Xylella fastidiosa (strain 9a5c)</name>
    <dbReference type="NCBI Taxonomy" id="160492"/>
    <lineage>
        <taxon>Bacteria</taxon>
        <taxon>Pseudomonadati</taxon>
        <taxon>Pseudomonadota</taxon>
        <taxon>Gammaproteobacteria</taxon>
        <taxon>Lysobacterales</taxon>
        <taxon>Lysobacteraceae</taxon>
        <taxon>Xylella</taxon>
    </lineage>
</organism>
<evidence type="ECO:0000255" key="1">
    <source>
        <dbReference type="HAMAP-Rule" id="MF_00146"/>
    </source>
</evidence>
<gene>
    <name evidence="1" type="primary">dcd</name>
    <name type="ordered locus">XF_0762</name>
</gene>
<keyword id="KW-0378">Hydrolase</keyword>
<keyword id="KW-0546">Nucleotide metabolism</keyword>
<keyword id="KW-0547">Nucleotide-binding</keyword>
<proteinExistence type="inferred from homology"/>
<dbReference type="EC" id="3.5.4.13" evidence="1"/>
<dbReference type="EMBL" id="AE003849">
    <property type="protein sequence ID" value="AAF83572.1"/>
    <property type="molecule type" value="Genomic_DNA"/>
</dbReference>
<dbReference type="PIR" id="G82765">
    <property type="entry name" value="G82765"/>
</dbReference>
<dbReference type="RefSeq" id="WP_010893285.1">
    <property type="nucleotide sequence ID" value="NC_002488.3"/>
</dbReference>
<dbReference type="SMR" id="Q9PFB6"/>
<dbReference type="STRING" id="160492.XF_0762"/>
<dbReference type="KEGG" id="xfa:XF_0762"/>
<dbReference type="eggNOG" id="COG0717">
    <property type="taxonomic scope" value="Bacteria"/>
</dbReference>
<dbReference type="HOGENOM" id="CLU_087476_4_0_6"/>
<dbReference type="UniPathway" id="UPA00610">
    <property type="reaction ID" value="UER00665"/>
</dbReference>
<dbReference type="Proteomes" id="UP000000812">
    <property type="component" value="Chromosome"/>
</dbReference>
<dbReference type="GO" id="GO:0008829">
    <property type="term" value="F:dCTP deaminase activity"/>
    <property type="evidence" value="ECO:0007669"/>
    <property type="project" value="UniProtKB-UniRule"/>
</dbReference>
<dbReference type="GO" id="GO:0000166">
    <property type="term" value="F:nucleotide binding"/>
    <property type="evidence" value="ECO:0007669"/>
    <property type="project" value="UniProtKB-KW"/>
</dbReference>
<dbReference type="GO" id="GO:0006226">
    <property type="term" value="P:dUMP biosynthetic process"/>
    <property type="evidence" value="ECO:0007669"/>
    <property type="project" value="UniProtKB-UniPathway"/>
</dbReference>
<dbReference type="GO" id="GO:0006229">
    <property type="term" value="P:dUTP biosynthetic process"/>
    <property type="evidence" value="ECO:0007669"/>
    <property type="project" value="UniProtKB-UniRule"/>
</dbReference>
<dbReference type="GO" id="GO:0015949">
    <property type="term" value="P:nucleobase-containing small molecule interconversion"/>
    <property type="evidence" value="ECO:0007669"/>
    <property type="project" value="TreeGrafter"/>
</dbReference>
<dbReference type="CDD" id="cd07557">
    <property type="entry name" value="trimeric_dUTPase"/>
    <property type="match status" value="1"/>
</dbReference>
<dbReference type="FunFam" id="2.70.40.10:FF:000001">
    <property type="entry name" value="dCTP deaminase"/>
    <property type="match status" value="1"/>
</dbReference>
<dbReference type="Gene3D" id="2.70.40.10">
    <property type="match status" value="1"/>
</dbReference>
<dbReference type="HAMAP" id="MF_00146">
    <property type="entry name" value="dCTP_deaminase"/>
    <property type="match status" value="1"/>
</dbReference>
<dbReference type="InterPro" id="IPR011962">
    <property type="entry name" value="dCTP_deaminase"/>
</dbReference>
<dbReference type="InterPro" id="IPR036157">
    <property type="entry name" value="dUTPase-like_sf"/>
</dbReference>
<dbReference type="InterPro" id="IPR033704">
    <property type="entry name" value="dUTPase_trimeric"/>
</dbReference>
<dbReference type="NCBIfam" id="TIGR02274">
    <property type="entry name" value="dCTP_deam"/>
    <property type="match status" value="1"/>
</dbReference>
<dbReference type="PANTHER" id="PTHR42680">
    <property type="entry name" value="DCTP DEAMINASE"/>
    <property type="match status" value="1"/>
</dbReference>
<dbReference type="PANTHER" id="PTHR42680:SF3">
    <property type="entry name" value="DCTP DEAMINASE"/>
    <property type="match status" value="1"/>
</dbReference>
<dbReference type="Pfam" id="PF22769">
    <property type="entry name" value="DCD"/>
    <property type="match status" value="1"/>
</dbReference>
<dbReference type="SUPFAM" id="SSF51283">
    <property type="entry name" value="dUTPase-like"/>
    <property type="match status" value="1"/>
</dbReference>
<reference key="1">
    <citation type="journal article" date="2000" name="Nature">
        <title>The genome sequence of the plant pathogen Xylella fastidiosa.</title>
        <authorList>
            <person name="Simpson A.J.G."/>
            <person name="Reinach F.C."/>
            <person name="Arruda P."/>
            <person name="Abreu F.A."/>
            <person name="Acencio M."/>
            <person name="Alvarenga R."/>
            <person name="Alves L.M.C."/>
            <person name="Araya J.E."/>
            <person name="Baia G.S."/>
            <person name="Baptista C.S."/>
            <person name="Barros M.H."/>
            <person name="Bonaccorsi E.D."/>
            <person name="Bordin S."/>
            <person name="Bove J.M."/>
            <person name="Briones M.R.S."/>
            <person name="Bueno M.R.P."/>
            <person name="Camargo A.A."/>
            <person name="Camargo L.E.A."/>
            <person name="Carraro D.M."/>
            <person name="Carrer H."/>
            <person name="Colauto N.B."/>
            <person name="Colombo C."/>
            <person name="Costa F.F."/>
            <person name="Costa M.C.R."/>
            <person name="Costa-Neto C.M."/>
            <person name="Coutinho L.L."/>
            <person name="Cristofani M."/>
            <person name="Dias-Neto E."/>
            <person name="Docena C."/>
            <person name="El-Dorry H."/>
            <person name="Facincani A.P."/>
            <person name="Ferreira A.J.S."/>
            <person name="Ferreira V.C.A."/>
            <person name="Ferro J.A."/>
            <person name="Fraga J.S."/>
            <person name="Franca S.C."/>
            <person name="Franco M.C."/>
            <person name="Frohme M."/>
            <person name="Furlan L.R."/>
            <person name="Garnier M."/>
            <person name="Goldman G.H."/>
            <person name="Goldman M.H.S."/>
            <person name="Gomes S.L."/>
            <person name="Gruber A."/>
            <person name="Ho P.L."/>
            <person name="Hoheisel J.D."/>
            <person name="Junqueira M.L."/>
            <person name="Kemper E.L."/>
            <person name="Kitajima J.P."/>
            <person name="Krieger J.E."/>
            <person name="Kuramae E.E."/>
            <person name="Laigret F."/>
            <person name="Lambais M.R."/>
            <person name="Leite L.C.C."/>
            <person name="Lemos E.G.M."/>
            <person name="Lemos M.V.F."/>
            <person name="Lopes S.A."/>
            <person name="Lopes C.R."/>
            <person name="Machado J.A."/>
            <person name="Machado M.A."/>
            <person name="Madeira A.M.B.N."/>
            <person name="Madeira H.M.F."/>
            <person name="Marino C.L."/>
            <person name="Marques M.V."/>
            <person name="Martins E.A.L."/>
            <person name="Martins E.M.F."/>
            <person name="Matsukuma A.Y."/>
            <person name="Menck C.F.M."/>
            <person name="Miracca E.C."/>
            <person name="Miyaki C.Y."/>
            <person name="Monteiro-Vitorello C.B."/>
            <person name="Moon D.H."/>
            <person name="Nagai M.A."/>
            <person name="Nascimento A.L.T.O."/>
            <person name="Netto L.E.S."/>
            <person name="Nhani A. Jr."/>
            <person name="Nobrega F.G."/>
            <person name="Nunes L.R."/>
            <person name="Oliveira M.A."/>
            <person name="de Oliveira M.C."/>
            <person name="de Oliveira R.C."/>
            <person name="Palmieri D.A."/>
            <person name="Paris A."/>
            <person name="Peixoto B.R."/>
            <person name="Pereira G.A.G."/>
            <person name="Pereira H.A. Jr."/>
            <person name="Pesquero J.B."/>
            <person name="Quaggio R.B."/>
            <person name="Roberto P.G."/>
            <person name="Rodrigues V."/>
            <person name="de Rosa A.J.M."/>
            <person name="de Rosa V.E. Jr."/>
            <person name="de Sa R.G."/>
            <person name="Santelli R.V."/>
            <person name="Sawasaki H.E."/>
            <person name="da Silva A.C.R."/>
            <person name="da Silva A.M."/>
            <person name="da Silva F.R."/>
            <person name="Silva W.A. Jr."/>
            <person name="da Silveira J.F."/>
            <person name="Silvestri M.L.Z."/>
            <person name="Siqueira W.J."/>
            <person name="de Souza A.A."/>
            <person name="de Souza A.P."/>
            <person name="Terenzi M.F."/>
            <person name="Truffi D."/>
            <person name="Tsai S.M."/>
            <person name="Tsuhako M.H."/>
            <person name="Vallada H."/>
            <person name="Van Sluys M.A."/>
            <person name="Verjovski-Almeida S."/>
            <person name="Vettore A.L."/>
            <person name="Zago M.A."/>
            <person name="Zatz M."/>
            <person name="Meidanis J."/>
            <person name="Setubal J.C."/>
        </authorList>
    </citation>
    <scope>NUCLEOTIDE SEQUENCE [LARGE SCALE GENOMIC DNA]</scope>
    <source>
        <strain>9a5c</strain>
    </source>
</reference>
<accession>Q9PFB6</accession>
<sequence length="191" mass="21531">MSIKSDRWIRHMAQQHGMIAPFEPGQIKQNATGQRIVSYGTSSYGYDVRCSREFKIFTNINSTIVDPKQFDNGSFIDVESDVCIIPPNSFALARTIEYFRIPRNVLVICLGKSTYARCGIIVNVTPLEPEWEGHVTLEFSNTTPLPARIYANEGVAQMLFLQADPDDVCQTSYRDRNGKYQGQTGVTLPRT</sequence>
<name>DCD_XYLFA</name>